<dbReference type="EMBL" id="BA000012">
    <property type="protein sequence ID" value="BAB50091.1"/>
    <property type="molecule type" value="Genomic_DNA"/>
</dbReference>
<dbReference type="RefSeq" id="WP_010911438.1">
    <property type="nucleotide sequence ID" value="NC_002678.2"/>
</dbReference>
<dbReference type="SMR" id="Q98GX5"/>
<dbReference type="KEGG" id="mlo:mll3133"/>
<dbReference type="PATRIC" id="fig|266835.9.peg.2496"/>
<dbReference type="eggNOG" id="COG2060">
    <property type="taxonomic scope" value="Bacteria"/>
</dbReference>
<dbReference type="HOGENOM" id="CLU_018614_3_0_5"/>
<dbReference type="Proteomes" id="UP000000552">
    <property type="component" value="Chromosome"/>
</dbReference>
<dbReference type="GO" id="GO:0005886">
    <property type="term" value="C:plasma membrane"/>
    <property type="evidence" value="ECO:0007669"/>
    <property type="project" value="UniProtKB-SubCell"/>
</dbReference>
<dbReference type="GO" id="GO:0008556">
    <property type="term" value="F:P-type potassium transmembrane transporter activity"/>
    <property type="evidence" value="ECO:0007669"/>
    <property type="project" value="InterPro"/>
</dbReference>
<dbReference type="GO" id="GO:0030955">
    <property type="term" value="F:potassium ion binding"/>
    <property type="evidence" value="ECO:0007669"/>
    <property type="project" value="UniProtKB-UniRule"/>
</dbReference>
<dbReference type="HAMAP" id="MF_00275">
    <property type="entry name" value="KdpA"/>
    <property type="match status" value="1"/>
</dbReference>
<dbReference type="InterPro" id="IPR004623">
    <property type="entry name" value="KdpA"/>
</dbReference>
<dbReference type="NCBIfam" id="TIGR00680">
    <property type="entry name" value="kdpA"/>
    <property type="match status" value="1"/>
</dbReference>
<dbReference type="PANTHER" id="PTHR30607">
    <property type="entry name" value="POTASSIUM-TRANSPORTING ATPASE A CHAIN"/>
    <property type="match status" value="1"/>
</dbReference>
<dbReference type="PANTHER" id="PTHR30607:SF2">
    <property type="entry name" value="POTASSIUM-TRANSPORTING ATPASE POTASSIUM-BINDING SUBUNIT"/>
    <property type="match status" value="1"/>
</dbReference>
<dbReference type="Pfam" id="PF03814">
    <property type="entry name" value="KdpA"/>
    <property type="match status" value="1"/>
</dbReference>
<dbReference type="PIRSF" id="PIRSF001294">
    <property type="entry name" value="K_ATPaseA"/>
    <property type="match status" value="1"/>
</dbReference>
<feature type="chain" id="PRO_0000166517" description="Potassium-transporting ATPase potassium-binding subunit">
    <location>
        <begin position="1"/>
        <end position="567"/>
    </location>
</feature>
<feature type="transmembrane region" description="Helical" evidence="1">
    <location>
        <begin position="5"/>
        <end position="25"/>
    </location>
</feature>
<feature type="transmembrane region" description="Helical" evidence="1">
    <location>
        <begin position="64"/>
        <end position="84"/>
    </location>
</feature>
<feature type="transmembrane region" description="Helical" evidence="1">
    <location>
        <begin position="136"/>
        <end position="156"/>
    </location>
</feature>
<feature type="transmembrane region" description="Helical" evidence="1">
    <location>
        <begin position="179"/>
        <end position="199"/>
    </location>
</feature>
<feature type="transmembrane region" description="Helical" evidence="1">
    <location>
        <begin position="254"/>
        <end position="274"/>
    </location>
</feature>
<feature type="transmembrane region" description="Helical" evidence="1">
    <location>
        <begin position="285"/>
        <end position="305"/>
    </location>
</feature>
<feature type="transmembrane region" description="Helical" evidence="1">
    <location>
        <begin position="330"/>
        <end position="350"/>
    </location>
</feature>
<feature type="transmembrane region" description="Helical" evidence="1">
    <location>
        <begin position="357"/>
        <end position="376"/>
    </location>
</feature>
<feature type="transmembrane region" description="Helical" evidence="1">
    <location>
        <begin position="421"/>
        <end position="441"/>
    </location>
</feature>
<feature type="transmembrane region" description="Helical" evidence="1">
    <location>
        <begin position="486"/>
        <end position="506"/>
    </location>
</feature>
<feature type="transmembrane region" description="Helical" evidence="1">
    <location>
        <begin position="529"/>
        <end position="549"/>
    </location>
</feature>
<sequence>MTLNGWIQILVFCGIIGLLTKPLGFYMHRVFNGDRTPLSPIFGPLERGLYRICGTSEREEQHWTAYAVALLLFNLAGFLVLYALQRLQGSLPYNPAGMGAVDPALAFNTAASFVTNTNWQNYGGESTMSYLLQMAGLTVQNFVSAATGIAIAIALIRGFARASGKSIGNFWVDMTRCTLYVLLPLCIVLTLVYVWLGIPQTLGPYVDATTLEGAKQTIALGPVASQVAIKMLGTNGGGFFNANAAHPFENPDAISNLIQMVTIFALGAALTNVFGRMVGNQRQGWAILASMGALFIAGVAVCYWAEAAGNPLVHALGLDGGNMEGKETRFGIALSALFAVITTAASCGAVNAMHDSFTALGGMIPLINMQLGEVIVGGVGAGFYGILMFIVVAVFVAGLMVGRTPEYLGKKIEAKEVKMAMLAILCLPLAMLIFTAIAVVLPSAVASIANGGPHGFSEVLYAYTSAAANNGSAFGGLSGNTPWYNITIGIGMLMGRFLVIIPALAIAGSLAAKKTVPASAGTFPTDGPLFVGLLIGVIVIVGGLTFFPALAVGPIIEHLAMIHGQTF</sequence>
<accession>Q98GX5</accession>
<gene>
    <name evidence="1" type="primary">kdpA</name>
    <name type="ordered locus">mll3133</name>
</gene>
<name>KDPA_RHILO</name>
<evidence type="ECO:0000255" key="1">
    <source>
        <dbReference type="HAMAP-Rule" id="MF_00275"/>
    </source>
</evidence>
<comment type="function">
    <text evidence="1">Part of the high-affinity ATP-driven potassium transport (or Kdp) system, which catalyzes the hydrolysis of ATP coupled with the electrogenic transport of potassium into the cytoplasm. This subunit binds the periplasmic potassium ions and delivers the ions to the membrane domain of KdpB through an intramembrane tunnel.</text>
</comment>
<comment type="subunit">
    <text evidence="1">The system is composed of three essential subunits: KdpA, KdpB and KdpC.</text>
</comment>
<comment type="subcellular location">
    <subcellularLocation>
        <location evidence="1">Cell inner membrane</location>
        <topology evidence="1">Multi-pass membrane protein</topology>
    </subcellularLocation>
</comment>
<comment type="similarity">
    <text evidence="1">Belongs to the KdpA family.</text>
</comment>
<proteinExistence type="inferred from homology"/>
<keyword id="KW-0997">Cell inner membrane</keyword>
<keyword id="KW-1003">Cell membrane</keyword>
<keyword id="KW-0406">Ion transport</keyword>
<keyword id="KW-0472">Membrane</keyword>
<keyword id="KW-0630">Potassium</keyword>
<keyword id="KW-0633">Potassium transport</keyword>
<keyword id="KW-0812">Transmembrane</keyword>
<keyword id="KW-1133">Transmembrane helix</keyword>
<keyword id="KW-0813">Transport</keyword>
<reference key="1">
    <citation type="journal article" date="2000" name="DNA Res.">
        <title>Complete genome structure of the nitrogen-fixing symbiotic bacterium Mesorhizobium loti.</title>
        <authorList>
            <person name="Kaneko T."/>
            <person name="Nakamura Y."/>
            <person name="Sato S."/>
            <person name="Asamizu E."/>
            <person name="Kato T."/>
            <person name="Sasamoto S."/>
            <person name="Watanabe A."/>
            <person name="Idesawa K."/>
            <person name="Ishikawa A."/>
            <person name="Kawashima K."/>
            <person name="Kimura T."/>
            <person name="Kishida Y."/>
            <person name="Kiyokawa C."/>
            <person name="Kohara M."/>
            <person name="Matsumoto M."/>
            <person name="Matsuno A."/>
            <person name="Mochizuki Y."/>
            <person name="Nakayama S."/>
            <person name="Nakazaki N."/>
            <person name="Shimpo S."/>
            <person name="Sugimoto M."/>
            <person name="Takeuchi C."/>
            <person name="Yamada M."/>
            <person name="Tabata S."/>
        </authorList>
    </citation>
    <scope>NUCLEOTIDE SEQUENCE [LARGE SCALE GENOMIC DNA]</scope>
    <source>
        <strain>LMG 29417 / CECT 9101 / MAFF 303099</strain>
    </source>
</reference>
<organism>
    <name type="scientific">Mesorhizobium japonicum (strain LMG 29417 / CECT 9101 / MAFF 303099)</name>
    <name type="common">Mesorhizobium loti (strain MAFF 303099)</name>
    <dbReference type="NCBI Taxonomy" id="266835"/>
    <lineage>
        <taxon>Bacteria</taxon>
        <taxon>Pseudomonadati</taxon>
        <taxon>Pseudomonadota</taxon>
        <taxon>Alphaproteobacteria</taxon>
        <taxon>Hyphomicrobiales</taxon>
        <taxon>Phyllobacteriaceae</taxon>
        <taxon>Mesorhizobium</taxon>
    </lineage>
</organism>
<protein>
    <recommendedName>
        <fullName evidence="1">Potassium-transporting ATPase potassium-binding subunit</fullName>
    </recommendedName>
    <alternativeName>
        <fullName evidence="1">ATP phosphohydrolase [potassium-transporting] A chain</fullName>
    </alternativeName>
    <alternativeName>
        <fullName evidence="1">Potassium-binding and translocating subunit A</fullName>
    </alternativeName>
    <alternativeName>
        <fullName evidence="1">Potassium-translocating ATPase A chain</fullName>
    </alternativeName>
</protein>